<accession>Q6FLL9</accession>
<organism>
    <name type="scientific">Candida glabrata (strain ATCC 2001 / BCRC 20586 / JCM 3761 / NBRC 0622 / NRRL Y-65 / CBS 138)</name>
    <name type="common">Yeast</name>
    <name type="synonym">Nakaseomyces glabratus</name>
    <dbReference type="NCBI Taxonomy" id="284593"/>
    <lineage>
        <taxon>Eukaryota</taxon>
        <taxon>Fungi</taxon>
        <taxon>Dikarya</taxon>
        <taxon>Ascomycota</taxon>
        <taxon>Saccharomycotina</taxon>
        <taxon>Saccharomycetes</taxon>
        <taxon>Saccharomycetales</taxon>
        <taxon>Saccharomycetaceae</taxon>
        <taxon>Nakaseomyces</taxon>
    </lineage>
</organism>
<evidence type="ECO:0000250" key="1"/>
<evidence type="ECO:0000255" key="2"/>
<evidence type="ECO:0000256" key="3">
    <source>
        <dbReference type="SAM" id="MobiDB-lite"/>
    </source>
</evidence>
<evidence type="ECO:0000305" key="4"/>
<dbReference type="EMBL" id="CR380958">
    <property type="protein sequence ID" value="CAG61845.1"/>
    <property type="molecule type" value="Genomic_DNA"/>
</dbReference>
<dbReference type="RefSeq" id="XP_448875.1">
    <property type="nucleotide sequence ID" value="XM_448875.1"/>
</dbReference>
<dbReference type="SMR" id="Q6FLL9"/>
<dbReference type="FunCoup" id="Q6FLL9">
    <property type="interactions" value="43"/>
</dbReference>
<dbReference type="STRING" id="284593.Q6FLL9"/>
<dbReference type="EnsemblFungi" id="CAGL0L02409g-T">
    <property type="protein sequence ID" value="CAGL0L02409g-T-p1"/>
    <property type="gene ID" value="CAGL0L02409g"/>
</dbReference>
<dbReference type="KEGG" id="cgr:2890905"/>
<dbReference type="CGD" id="CAL0135586">
    <property type="gene designation" value="CAGL0L02409g"/>
</dbReference>
<dbReference type="VEuPathDB" id="FungiDB:CAGL0L02409g"/>
<dbReference type="eggNOG" id="ENOG502S95F">
    <property type="taxonomic scope" value="Eukaryota"/>
</dbReference>
<dbReference type="HOGENOM" id="CLU_959745_0_0_1"/>
<dbReference type="InParanoid" id="Q6FLL9"/>
<dbReference type="OMA" id="HICITEP"/>
<dbReference type="Proteomes" id="UP000002428">
    <property type="component" value="Chromosome L"/>
</dbReference>
<dbReference type="GO" id="GO:0031410">
    <property type="term" value="C:cytoplasmic vesicle"/>
    <property type="evidence" value="ECO:0007669"/>
    <property type="project" value="UniProtKB-KW"/>
</dbReference>
<dbReference type="GO" id="GO:0005773">
    <property type="term" value="C:vacuole"/>
    <property type="evidence" value="ECO:0007669"/>
    <property type="project" value="UniProtKB-SubCell"/>
</dbReference>
<proteinExistence type="inferred from homology"/>
<feature type="chain" id="PRO_0000320512" description="Biogenesis of lysosome-related organelles complex 1 subunit VAB2">
    <location>
        <begin position="1"/>
        <end position="290"/>
    </location>
</feature>
<feature type="region of interest" description="Disordered" evidence="3">
    <location>
        <begin position="173"/>
        <end position="211"/>
    </location>
</feature>
<feature type="coiled-coil region" evidence="2">
    <location>
        <begin position="54"/>
        <end position="130"/>
    </location>
</feature>
<feature type="compositionally biased region" description="Acidic residues" evidence="3">
    <location>
        <begin position="195"/>
        <end position="205"/>
    </location>
</feature>
<comment type="function">
    <text evidence="1">Component of the biogenesis of lysosome-related organelles complex-1 (BLOC-1) involved in endosomal cargo sorting.</text>
</comment>
<comment type="subunit">
    <text evidence="1">Component of the biogenesis of lysosome-related organelles complex-1 (BLOC-1) composed of at least BLI1, BLS1, CNL1, KXD1, SNN1 and VAB2.</text>
</comment>
<comment type="subcellular location">
    <subcellularLocation>
        <location evidence="1">Cytoplasmic vesicle</location>
    </subcellularLocation>
    <subcellularLocation>
        <location evidence="1">Vacuole</location>
    </subcellularLocation>
    <subcellularLocation>
        <location evidence="1">Cytoplasm</location>
    </subcellularLocation>
</comment>
<comment type="similarity">
    <text evidence="4">Belongs to the VAB2 family.</text>
</comment>
<gene>
    <name type="primary">VAB2</name>
    <name type="ordered locus">CAGL0L02409g</name>
</gene>
<keyword id="KW-0175">Coiled coil</keyword>
<keyword id="KW-0963">Cytoplasm</keyword>
<keyword id="KW-0968">Cytoplasmic vesicle</keyword>
<keyword id="KW-1185">Reference proteome</keyword>
<keyword id="KW-0813">Transport</keyword>
<keyword id="KW-0926">Vacuole</keyword>
<protein>
    <recommendedName>
        <fullName>Biogenesis of lysosome-related organelles complex 1 subunit VAB2</fullName>
        <shortName>BLOC-1 subunit VAB2</shortName>
    </recommendedName>
</protein>
<name>VAB2_CANGA</name>
<reference key="1">
    <citation type="journal article" date="2004" name="Nature">
        <title>Genome evolution in yeasts.</title>
        <authorList>
            <person name="Dujon B."/>
            <person name="Sherman D."/>
            <person name="Fischer G."/>
            <person name="Durrens P."/>
            <person name="Casaregola S."/>
            <person name="Lafontaine I."/>
            <person name="de Montigny J."/>
            <person name="Marck C."/>
            <person name="Neuveglise C."/>
            <person name="Talla E."/>
            <person name="Goffard N."/>
            <person name="Frangeul L."/>
            <person name="Aigle M."/>
            <person name="Anthouard V."/>
            <person name="Babour A."/>
            <person name="Barbe V."/>
            <person name="Barnay S."/>
            <person name="Blanchin S."/>
            <person name="Beckerich J.-M."/>
            <person name="Beyne E."/>
            <person name="Bleykasten C."/>
            <person name="Boisrame A."/>
            <person name="Boyer J."/>
            <person name="Cattolico L."/>
            <person name="Confanioleri F."/>
            <person name="de Daruvar A."/>
            <person name="Despons L."/>
            <person name="Fabre E."/>
            <person name="Fairhead C."/>
            <person name="Ferry-Dumazet H."/>
            <person name="Groppi A."/>
            <person name="Hantraye F."/>
            <person name="Hennequin C."/>
            <person name="Jauniaux N."/>
            <person name="Joyet P."/>
            <person name="Kachouri R."/>
            <person name="Kerrest A."/>
            <person name="Koszul R."/>
            <person name="Lemaire M."/>
            <person name="Lesur I."/>
            <person name="Ma L."/>
            <person name="Muller H."/>
            <person name="Nicaud J.-M."/>
            <person name="Nikolski M."/>
            <person name="Oztas S."/>
            <person name="Ozier-Kalogeropoulos O."/>
            <person name="Pellenz S."/>
            <person name="Potier S."/>
            <person name="Richard G.-F."/>
            <person name="Straub M.-L."/>
            <person name="Suleau A."/>
            <person name="Swennen D."/>
            <person name="Tekaia F."/>
            <person name="Wesolowski-Louvel M."/>
            <person name="Westhof E."/>
            <person name="Wirth B."/>
            <person name="Zeniou-Meyer M."/>
            <person name="Zivanovic Y."/>
            <person name="Bolotin-Fukuhara M."/>
            <person name="Thierry A."/>
            <person name="Bouchier C."/>
            <person name="Caudron B."/>
            <person name="Scarpelli C."/>
            <person name="Gaillardin C."/>
            <person name="Weissenbach J."/>
            <person name="Wincker P."/>
            <person name="Souciet J.-L."/>
        </authorList>
    </citation>
    <scope>NUCLEOTIDE SEQUENCE [LARGE SCALE GENOMIC DNA]</scope>
    <source>
        <strain>ATCC 2001 / BCRC 20586 / JCM 3761 / NBRC 0622 / NRRL Y-65 / CBS 138</strain>
    </source>
</reference>
<sequence>MDNKPLITVAEASEYKELLALEKLPQSSQLSYKAIFKSVSSEWEQVKTDITHVNENILKDINEEIEQTDQIEKKLKSSFKSINQHYHKLLKHRRNRQNDEGTSDLFLKYKNDVNELASNIETIENGLDMVIQNMISFDSTSSLDGDSLFNSSIITKRHYPLLYDLIHKNYNKGQNSDKTSKDNSKITTDVTLPASDEDNSPDIEEQQSKLSSLSFSIEKAQNPIPVDKAKNTDNSSRSIINSNVKIKNPTLILPMIKQRAQPSVALDAKPVIARDSYKADTKSIIAPEIT</sequence>